<name>RPOZ_CLOB1</name>
<gene>
    <name evidence="1" type="primary">rpoZ</name>
    <name type="ordered locus">CLB_2386</name>
</gene>
<keyword id="KW-0240">DNA-directed RNA polymerase</keyword>
<keyword id="KW-0548">Nucleotidyltransferase</keyword>
<keyword id="KW-0804">Transcription</keyword>
<keyword id="KW-0808">Transferase</keyword>
<reference key="1">
    <citation type="journal article" date="2007" name="PLoS ONE">
        <title>Analysis of the neurotoxin complex genes in Clostridium botulinum A1-A4 and B1 strains: BoNT/A3, /Ba4 and /B1 clusters are located within plasmids.</title>
        <authorList>
            <person name="Smith T.J."/>
            <person name="Hill K.K."/>
            <person name="Foley B.T."/>
            <person name="Detter J.C."/>
            <person name="Munk A.C."/>
            <person name="Bruce D.C."/>
            <person name="Doggett N.A."/>
            <person name="Smith L.A."/>
            <person name="Marks J.D."/>
            <person name="Xie G."/>
            <person name="Brettin T.S."/>
        </authorList>
    </citation>
    <scope>NUCLEOTIDE SEQUENCE [LARGE SCALE GENOMIC DNA]</scope>
    <source>
        <strain>ATCC 19397 / Type A</strain>
    </source>
</reference>
<dbReference type="EC" id="2.7.7.6" evidence="1"/>
<dbReference type="EMBL" id="CP000726">
    <property type="protein sequence ID" value="ABS34664.1"/>
    <property type="molecule type" value="Genomic_DNA"/>
</dbReference>
<dbReference type="RefSeq" id="WP_003388622.1">
    <property type="nucleotide sequence ID" value="NC_009697.1"/>
</dbReference>
<dbReference type="SMR" id="A7FW79"/>
<dbReference type="GeneID" id="92939254"/>
<dbReference type="KEGG" id="cba:CLB_2386"/>
<dbReference type="HOGENOM" id="CLU_125406_6_1_9"/>
<dbReference type="GO" id="GO:0000428">
    <property type="term" value="C:DNA-directed RNA polymerase complex"/>
    <property type="evidence" value="ECO:0007669"/>
    <property type="project" value="UniProtKB-KW"/>
</dbReference>
<dbReference type="GO" id="GO:0003677">
    <property type="term" value="F:DNA binding"/>
    <property type="evidence" value="ECO:0007669"/>
    <property type="project" value="UniProtKB-UniRule"/>
</dbReference>
<dbReference type="GO" id="GO:0003899">
    <property type="term" value="F:DNA-directed RNA polymerase activity"/>
    <property type="evidence" value="ECO:0007669"/>
    <property type="project" value="UniProtKB-UniRule"/>
</dbReference>
<dbReference type="GO" id="GO:0006351">
    <property type="term" value="P:DNA-templated transcription"/>
    <property type="evidence" value="ECO:0007669"/>
    <property type="project" value="UniProtKB-UniRule"/>
</dbReference>
<dbReference type="Gene3D" id="3.90.940.10">
    <property type="match status" value="1"/>
</dbReference>
<dbReference type="HAMAP" id="MF_00366">
    <property type="entry name" value="RNApol_bact_RpoZ"/>
    <property type="match status" value="1"/>
</dbReference>
<dbReference type="InterPro" id="IPR003716">
    <property type="entry name" value="DNA-dir_RNA_pol_omega"/>
</dbReference>
<dbReference type="InterPro" id="IPR006110">
    <property type="entry name" value="Pol_omega/Rpo6/RPB6"/>
</dbReference>
<dbReference type="InterPro" id="IPR036161">
    <property type="entry name" value="RPB6/omega-like_sf"/>
</dbReference>
<dbReference type="NCBIfam" id="TIGR00690">
    <property type="entry name" value="rpoZ"/>
    <property type="match status" value="1"/>
</dbReference>
<dbReference type="PANTHER" id="PTHR34476">
    <property type="entry name" value="DNA-DIRECTED RNA POLYMERASE SUBUNIT OMEGA"/>
    <property type="match status" value="1"/>
</dbReference>
<dbReference type="PANTHER" id="PTHR34476:SF1">
    <property type="entry name" value="DNA-DIRECTED RNA POLYMERASE SUBUNIT OMEGA"/>
    <property type="match status" value="1"/>
</dbReference>
<dbReference type="Pfam" id="PF01192">
    <property type="entry name" value="RNA_pol_Rpb6"/>
    <property type="match status" value="1"/>
</dbReference>
<dbReference type="SMART" id="SM01409">
    <property type="entry name" value="RNA_pol_Rpb6"/>
    <property type="match status" value="1"/>
</dbReference>
<dbReference type="SUPFAM" id="SSF63562">
    <property type="entry name" value="RPB6/omega subunit-like"/>
    <property type="match status" value="1"/>
</dbReference>
<comment type="function">
    <text evidence="1">Promotes RNA polymerase assembly. Latches the N- and C-terminal regions of the beta' subunit thereby facilitating its interaction with the beta and alpha subunits.</text>
</comment>
<comment type="catalytic activity">
    <reaction evidence="1">
        <text>RNA(n) + a ribonucleoside 5'-triphosphate = RNA(n+1) + diphosphate</text>
        <dbReference type="Rhea" id="RHEA:21248"/>
        <dbReference type="Rhea" id="RHEA-COMP:14527"/>
        <dbReference type="Rhea" id="RHEA-COMP:17342"/>
        <dbReference type="ChEBI" id="CHEBI:33019"/>
        <dbReference type="ChEBI" id="CHEBI:61557"/>
        <dbReference type="ChEBI" id="CHEBI:140395"/>
        <dbReference type="EC" id="2.7.7.6"/>
    </reaction>
</comment>
<comment type="subunit">
    <text evidence="1">The RNAP catalytic core consists of 2 alpha, 1 beta, 1 beta' and 1 omega subunit. When a sigma factor is associated with the core the holoenzyme is formed, which can initiate transcription.</text>
</comment>
<comment type="similarity">
    <text evidence="1">Belongs to the RNA polymerase subunit omega family.</text>
</comment>
<proteinExistence type="inferred from homology"/>
<protein>
    <recommendedName>
        <fullName evidence="1">DNA-directed RNA polymerase subunit omega</fullName>
        <shortName evidence="1">RNAP omega subunit</shortName>
        <ecNumber evidence="1">2.7.7.6</ecNumber>
    </recommendedName>
    <alternativeName>
        <fullName evidence="1">RNA polymerase omega subunit</fullName>
    </alternativeName>
    <alternativeName>
        <fullName evidence="1">Transcriptase subunit omega</fullName>
    </alternativeName>
</protein>
<accession>A7FW79</accession>
<evidence type="ECO:0000255" key="1">
    <source>
        <dbReference type="HAMAP-Rule" id="MF_00366"/>
    </source>
</evidence>
<organism>
    <name type="scientific">Clostridium botulinum (strain ATCC 19397 / Type A)</name>
    <dbReference type="NCBI Taxonomy" id="441770"/>
    <lineage>
        <taxon>Bacteria</taxon>
        <taxon>Bacillati</taxon>
        <taxon>Bacillota</taxon>
        <taxon>Clostridia</taxon>
        <taxon>Eubacteriales</taxon>
        <taxon>Clostridiaceae</taxon>
        <taxon>Clostridium</taxon>
    </lineage>
</organism>
<sequence>MSNSMINPSIVNLLEKVDDRYSLVTITSKRSRQLIDGAKPLVDIDSTKPVTVAINEIHEGKITYKTVKEGIK</sequence>
<feature type="chain" id="PRO_1000005911" description="DNA-directed RNA polymerase subunit omega">
    <location>
        <begin position="1"/>
        <end position="72"/>
    </location>
</feature>